<protein>
    <recommendedName>
        <fullName evidence="1">tRNA modification GTPase MnmE</fullName>
        <ecNumber evidence="1">3.6.-.-</ecNumber>
    </recommendedName>
</protein>
<feature type="chain" id="PRO_0000345900" description="tRNA modification GTPase MnmE">
    <location>
        <begin position="1"/>
        <end position="454"/>
    </location>
</feature>
<feature type="domain" description="TrmE-type G">
    <location>
        <begin position="216"/>
        <end position="377"/>
    </location>
</feature>
<feature type="binding site" evidence="1">
    <location>
        <position position="23"/>
    </location>
    <ligand>
        <name>(6S)-5-formyl-5,6,7,8-tetrahydrofolate</name>
        <dbReference type="ChEBI" id="CHEBI:57457"/>
    </ligand>
</feature>
<feature type="binding site" evidence="1">
    <location>
        <position position="80"/>
    </location>
    <ligand>
        <name>(6S)-5-formyl-5,6,7,8-tetrahydrofolate</name>
        <dbReference type="ChEBI" id="CHEBI:57457"/>
    </ligand>
</feature>
<feature type="binding site" evidence="1">
    <location>
        <position position="120"/>
    </location>
    <ligand>
        <name>(6S)-5-formyl-5,6,7,8-tetrahydrofolate</name>
        <dbReference type="ChEBI" id="CHEBI:57457"/>
    </ligand>
</feature>
<feature type="binding site" evidence="1">
    <location>
        <begin position="226"/>
        <end position="231"/>
    </location>
    <ligand>
        <name>GTP</name>
        <dbReference type="ChEBI" id="CHEBI:37565"/>
    </ligand>
</feature>
<feature type="binding site" evidence="1">
    <location>
        <position position="226"/>
    </location>
    <ligand>
        <name>K(+)</name>
        <dbReference type="ChEBI" id="CHEBI:29103"/>
    </ligand>
</feature>
<feature type="binding site" evidence="1">
    <location>
        <position position="230"/>
    </location>
    <ligand>
        <name>Mg(2+)</name>
        <dbReference type="ChEBI" id="CHEBI:18420"/>
    </ligand>
</feature>
<feature type="binding site" evidence="1">
    <location>
        <begin position="245"/>
        <end position="251"/>
    </location>
    <ligand>
        <name>GTP</name>
        <dbReference type="ChEBI" id="CHEBI:37565"/>
    </ligand>
</feature>
<feature type="binding site" evidence="1">
    <location>
        <position position="245"/>
    </location>
    <ligand>
        <name>K(+)</name>
        <dbReference type="ChEBI" id="CHEBI:29103"/>
    </ligand>
</feature>
<feature type="binding site" evidence="1">
    <location>
        <position position="247"/>
    </location>
    <ligand>
        <name>K(+)</name>
        <dbReference type="ChEBI" id="CHEBI:29103"/>
    </ligand>
</feature>
<feature type="binding site" evidence="1">
    <location>
        <position position="250"/>
    </location>
    <ligand>
        <name>K(+)</name>
        <dbReference type="ChEBI" id="CHEBI:29103"/>
    </ligand>
</feature>
<feature type="binding site" evidence="1">
    <location>
        <position position="251"/>
    </location>
    <ligand>
        <name>Mg(2+)</name>
        <dbReference type="ChEBI" id="CHEBI:18420"/>
    </ligand>
</feature>
<feature type="binding site" evidence="1">
    <location>
        <begin position="270"/>
        <end position="273"/>
    </location>
    <ligand>
        <name>GTP</name>
        <dbReference type="ChEBI" id="CHEBI:37565"/>
    </ligand>
</feature>
<feature type="binding site" evidence="1">
    <location>
        <begin position="335"/>
        <end position="338"/>
    </location>
    <ligand>
        <name>GTP</name>
        <dbReference type="ChEBI" id="CHEBI:37565"/>
    </ligand>
</feature>
<feature type="binding site" evidence="1">
    <location>
        <begin position="358"/>
        <end position="360"/>
    </location>
    <ligand>
        <name>GTP</name>
        <dbReference type="ChEBI" id="CHEBI:37565"/>
    </ligand>
</feature>
<feature type="binding site" evidence="1">
    <location>
        <position position="454"/>
    </location>
    <ligand>
        <name>(6S)-5-formyl-5,6,7,8-tetrahydrofolate</name>
        <dbReference type="ChEBI" id="CHEBI:57457"/>
    </ligand>
</feature>
<accession>A9MJT6</accession>
<keyword id="KW-0963">Cytoplasm</keyword>
<keyword id="KW-0342">GTP-binding</keyword>
<keyword id="KW-0378">Hydrolase</keyword>
<keyword id="KW-0460">Magnesium</keyword>
<keyword id="KW-0479">Metal-binding</keyword>
<keyword id="KW-0547">Nucleotide-binding</keyword>
<keyword id="KW-0630">Potassium</keyword>
<keyword id="KW-1185">Reference proteome</keyword>
<keyword id="KW-0819">tRNA processing</keyword>
<evidence type="ECO:0000255" key="1">
    <source>
        <dbReference type="HAMAP-Rule" id="MF_00379"/>
    </source>
</evidence>
<evidence type="ECO:0000305" key="2"/>
<dbReference type="EC" id="3.6.-.-" evidence="1"/>
<dbReference type="EMBL" id="CP000880">
    <property type="protein sequence ID" value="ABX23597.1"/>
    <property type="status" value="ALT_INIT"/>
    <property type="molecule type" value="Genomic_DNA"/>
</dbReference>
<dbReference type="SMR" id="A9MJT6"/>
<dbReference type="STRING" id="41514.SARI_03803"/>
<dbReference type="KEGG" id="ses:SARI_03803"/>
<dbReference type="HOGENOM" id="CLU_019624_4_1_6"/>
<dbReference type="Proteomes" id="UP000002084">
    <property type="component" value="Chromosome"/>
</dbReference>
<dbReference type="GO" id="GO:0005829">
    <property type="term" value="C:cytosol"/>
    <property type="evidence" value="ECO:0007669"/>
    <property type="project" value="TreeGrafter"/>
</dbReference>
<dbReference type="GO" id="GO:0005525">
    <property type="term" value="F:GTP binding"/>
    <property type="evidence" value="ECO:0007669"/>
    <property type="project" value="UniProtKB-UniRule"/>
</dbReference>
<dbReference type="GO" id="GO:0003924">
    <property type="term" value="F:GTPase activity"/>
    <property type="evidence" value="ECO:0007669"/>
    <property type="project" value="UniProtKB-UniRule"/>
</dbReference>
<dbReference type="GO" id="GO:0046872">
    <property type="term" value="F:metal ion binding"/>
    <property type="evidence" value="ECO:0007669"/>
    <property type="project" value="UniProtKB-KW"/>
</dbReference>
<dbReference type="GO" id="GO:0030488">
    <property type="term" value="P:tRNA methylation"/>
    <property type="evidence" value="ECO:0007669"/>
    <property type="project" value="TreeGrafter"/>
</dbReference>
<dbReference type="GO" id="GO:0002098">
    <property type="term" value="P:tRNA wobble uridine modification"/>
    <property type="evidence" value="ECO:0007669"/>
    <property type="project" value="TreeGrafter"/>
</dbReference>
<dbReference type="CDD" id="cd04164">
    <property type="entry name" value="trmE"/>
    <property type="match status" value="1"/>
</dbReference>
<dbReference type="CDD" id="cd14858">
    <property type="entry name" value="TrmE_N"/>
    <property type="match status" value="1"/>
</dbReference>
<dbReference type="FunFam" id="3.30.1360.120:FF:000001">
    <property type="entry name" value="tRNA modification GTPase MnmE"/>
    <property type="match status" value="1"/>
</dbReference>
<dbReference type="FunFam" id="3.40.50.300:FF:000249">
    <property type="entry name" value="tRNA modification GTPase MnmE"/>
    <property type="match status" value="1"/>
</dbReference>
<dbReference type="Gene3D" id="3.40.50.300">
    <property type="entry name" value="P-loop containing nucleotide triphosphate hydrolases"/>
    <property type="match status" value="1"/>
</dbReference>
<dbReference type="Gene3D" id="3.30.1360.120">
    <property type="entry name" value="Probable tRNA modification gtpase trme, domain 1"/>
    <property type="match status" value="1"/>
</dbReference>
<dbReference type="Gene3D" id="1.20.120.430">
    <property type="entry name" value="tRNA modification GTPase MnmE domain 2"/>
    <property type="match status" value="1"/>
</dbReference>
<dbReference type="HAMAP" id="MF_00379">
    <property type="entry name" value="GTPase_MnmE"/>
    <property type="match status" value="1"/>
</dbReference>
<dbReference type="InterPro" id="IPR031168">
    <property type="entry name" value="G_TrmE"/>
</dbReference>
<dbReference type="InterPro" id="IPR006073">
    <property type="entry name" value="GTP-bd"/>
</dbReference>
<dbReference type="InterPro" id="IPR018948">
    <property type="entry name" value="GTP-bd_TrmE_N"/>
</dbReference>
<dbReference type="InterPro" id="IPR004520">
    <property type="entry name" value="GTPase_MnmE"/>
</dbReference>
<dbReference type="InterPro" id="IPR027368">
    <property type="entry name" value="MnmE_dom2"/>
</dbReference>
<dbReference type="InterPro" id="IPR025867">
    <property type="entry name" value="MnmE_helical"/>
</dbReference>
<dbReference type="InterPro" id="IPR027417">
    <property type="entry name" value="P-loop_NTPase"/>
</dbReference>
<dbReference type="InterPro" id="IPR005225">
    <property type="entry name" value="Small_GTP-bd"/>
</dbReference>
<dbReference type="InterPro" id="IPR027266">
    <property type="entry name" value="TrmE/GcvT_dom1"/>
</dbReference>
<dbReference type="NCBIfam" id="TIGR00450">
    <property type="entry name" value="mnmE_trmE_thdF"/>
    <property type="match status" value="1"/>
</dbReference>
<dbReference type="NCBIfam" id="NF003661">
    <property type="entry name" value="PRK05291.1-3"/>
    <property type="match status" value="1"/>
</dbReference>
<dbReference type="NCBIfam" id="TIGR00231">
    <property type="entry name" value="small_GTP"/>
    <property type="match status" value="1"/>
</dbReference>
<dbReference type="PANTHER" id="PTHR42714">
    <property type="entry name" value="TRNA MODIFICATION GTPASE GTPBP3"/>
    <property type="match status" value="1"/>
</dbReference>
<dbReference type="PANTHER" id="PTHR42714:SF2">
    <property type="entry name" value="TRNA MODIFICATION GTPASE GTPBP3, MITOCHONDRIAL"/>
    <property type="match status" value="1"/>
</dbReference>
<dbReference type="Pfam" id="PF01926">
    <property type="entry name" value="MMR_HSR1"/>
    <property type="match status" value="1"/>
</dbReference>
<dbReference type="Pfam" id="PF12631">
    <property type="entry name" value="MnmE_helical"/>
    <property type="match status" value="1"/>
</dbReference>
<dbReference type="Pfam" id="PF10396">
    <property type="entry name" value="TrmE_N"/>
    <property type="match status" value="1"/>
</dbReference>
<dbReference type="SUPFAM" id="SSF52540">
    <property type="entry name" value="P-loop containing nucleoside triphosphate hydrolases"/>
    <property type="match status" value="1"/>
</dbReference>
<dbReference type="SUPFAM" id="SSF116878">
    <property type="entry name" value="TrmE connector domain"/>
    <property type="match status" value="1"/>
</dbReference>
<dbReference type="PROSITE" id="PS51709">
    <property type="entry name" value="G_TRME"/>
    <property type="match status" value="1"/>
</dbReference>
<name>MNME_SALAR</name>
<organism>
    <name type="scientific">Salmonella arizonae (strain ATCC BAA-731 / CDC346-86 / RSK2980)</name>
    <dbReference type="NCBI Taxonomy" id="41514"/>
    <lineage>
        <taxon>Bacteria</taxon>
        <taxon>Pseudomonadati</taxon>
        <taxon>Pseudomonadota</taxon>
        <taxon>Gammaproteobacteria</taxon>
        <taxon>Enterobacterales</taxon>
        <taxon>Enterobacteriaceae</taxon>
        <taxon>Salmonella</taxon>
    </lineage>
</organism>
<comment type="function">
    <text evidence="1">Exhibits a very high intrinsic GTPase hydrolysis rate. Involved in the addition of a carboxymethylaminomethyl (cmnm) group at the wobble position (U34) of certain tRNAs, forming tRNA-cmnm(5)s(2)U34.</text>
</comment>
<comment type="cofactor">
    <cofactor evidence="1">
        <name>K(+)</name>
        <dbReference type="ChEBI" id="CHEBI:29103"/>
    </cofactor>
    <text evidence="1">Binds 1 potassium ion per subunit.</text>
</comment>
<comment type="subunit">
    <text evidence="1">Homodimer. Heterotetramer of two MnmE and two MnmG subunits.</text>
</comment>
<comment type="subcellular location">
    <subcellularLocation>
        <location evidence="1">Cytoplasm</location>
    </subcellularLocation>
</comment>
<comment type="similarity">
    <text evidence="1">Belongs to the TRAFAC class TrmE-Era-EngA-EngB-Septin-like GTPase superfamily. TrmE GTPase family.</text>
</comment>
<comment type="sequence caution" evidence="2">
    <conflict type="erroneous initiation">
        <sequence resource="EMBL-CDS" id="ABX23597"/>
    </conflict>
</comment>
<sequence>MSHNDTIVAQATPPGRGGVGILRISGLNAKKVAQTVLGKLPKPRYADYLPFKDADGATLDQGIALWFPGPNSFTGEDVLELQGHGGPVILDLLLKRILTIPGVRIARPGEFSERAFLNDKLDLAQAEAIADLIDASSEQAARSALNSLQGAFSARVNHLVEALTHLRIYVEAAIDFPDEEIDFLSDGKIEAQLNGVIADLDAVRAEARQGSLLREGMKVVIAGRPNAGKSSLLNALAGREAAIVTDIAGTTRDVLREHIHIDGMPLHVIDTAGLRDASDEVERIGIERAWQEIEQADRVLFMVDGTTTDAVDPGDIWPDFIARLPKNLPITVVRNKADITGEMLGISEVNGHSLVRLSARTGEGVDVLRNHLKQSMGFDTNMEGGFLARRRHLQALAEAAEHLEQGKAQLLGAWAGELLAEELRLAQQSLSEITGEFTSDDLLGRIFSSFCIGK</sequence>
<gene>
    <name evidence="1" type="primary">mnmE</name>
    <name evidence="1" type="synonym">trmE</name>
    <name type="ordered locus">SARI_03803</name>
</gene>
<proteinExistence type="inferred from homology"/>
<reference key="1">
    <citation type="submission" date="2007-11" db="EMBL/GenBank/DDBJ databases">
        <authorList>
            <consortium name="The Salmonella enterica serovar Arizonae Genome Sequencing Project"/>
            <person name="McClelland M."/>
            <person name="Sanderson E.K."/>
            <person name="Porwollik S."/>
            <person name="Spieth J."/>
            <person name="Clifton W.S."/>
            <person name="Fulton R."/>
            <person name="Chunyan W."/>
            <person name="Wollam A."/>
            <person name="Shah N."/>
            <person name="Pepin K."/>
            <person name="Bhonagiri V."/>
            <person name="Nash W."/>
            <person name="Johnson M."/>
            <person name="Thiruvilangam P."/>
            <person name="Wilson R."/>
        </authorList>
    </citation>
    <scope>NUCLEOTIDE SEQUENCE [LARGE SCALE GENOMIC DNA]</scope>
    <source>
        <strain>ATCC BAA-731 / CDC346-86 / RSK2980</strain>
    </source>
</reference>